<organismHost>
    <name type="scientific">Gadus morhua</name>
    <name type="common">Atlantic cod</name>
    <dbReference type="NCBI Taxonomy" id="8049"/>
</organismHost>
<organismHost>
    <name type="scientific">Oncorhynchus kisutch</name>
    <name type="common">Coho salmon</name>
    <name type="synonym">Salmo kisutch</name>
    <dbReference type="NCBI Taxonomy" id="8019"/>
</organismHost>
<organismHost>
    <name type="scientific">Oncorhynchus mykiss</name>
    <name type="common">Rainbow trout</name>
    <name type="synonym">Salmo gairdneri</name>
    <dbReference type="NCBI Taxonomy" id="8022"/>
</organismHost>
<organismHost>
    <name type="scientific">Pollachius virens</name>
    <name type="common">Saithe</name>
    <name type="synonym">Gadus virens</name>
    <dbReference type="NCBI Taxonomy" id="8060"/>
</organismHost>
<organismHost>
    <name type="scientific">Salmo salar</name>
    <name type="common">Atlantic salmon</name>
    <dbReference type="NCBI Taxonomy" id="8030"/>
</organismHost>
<organismHost>
    <name type="scientific">Salmo trutta</name>
    <name type="common">Brown trout</name>
    <dbReference type="NCBI Taxonomy" id="8032"/>
</organismHost>
<evidence type="ECO:0000269" key="1">
    <source>
    </source>
</evidence>
<evidence type="ECO:0000303" key="2">
    <source>
    </source>
</evidence>
<keyword id="KW-0025">Alternative splicing</keyword>
<keyword id="KW-1048">Host nucleus</keyword>
<keyword id="KW-0945">Host-virus interaction</keyword>
<keyword id="KW-1090">Inhibition of host innate immune response by virus</keyword>
<keyword id="KW-1185">Reference proteome</keyword>
<keyword id="KW-0899">Viral immunoevasion</keyword>
<feature type="chain" id="PRO_0000403925" description="Protein P7">
    <location>
        <begin position="1"/>
        <end position="183"/>
    </location>
</feature>
<reference key="1">
    <citation type="journal article" date="2002" name="J. Gen. Virol.">
        <title>Genomic organization of infectious salmon anaemia virus.</title>
        <authorList>
            <person name="Clouthier S.C."/>
            <person name="Rector T."/>
            <person name="Brown N.E."/>
            <person name="Anderson E.D."/>
        </authorList>
    </citation>
    <scope>NUCLEOTIDE SEQUENCE [GENOMIC RNA]</scope>
</reference>
<reference key="2">
    <citation type="journal article" date="2011" name="Virus Res.">
        <title>Infectious salmon anemia virus--genetics and pathogenesis.</title>
        <authorList>
            <person name="Cottet L."/>
            <person name="Rivas-Aravena A."/>
            <person name="Cortez-San Martin M."/>
            <person name="Sandino A.M."/>
            <person name="Spencer E."/>
        </authorList>
    </citation>
    <scope>REVIEW</scope>
</reference>
<reference key="3">
    <citation type="journal article" date="2016" name="Fish Shellfish Immunol.">
        <title>Infectious salmon anemia virus segment 7 ORF1 and segment 8 ORF2 proteins inhibit IRF mediated activation of the Atlantic salmon IFNa1 promoter.</title>
        <authorList>
            <person name="Li C."/>
            <person name="Greiner-Tollersrud L."/>
            <person name="Robertsen B."/>
        </authorList>
    </citation>
    <scope>FUNCTION</scope>
    <scope>SUBCELLULAR LOCATION</scope>
</reference>
<proteinExistence type="predicted"/>
<protein>
    <recommendedName>
        <fullName>Protein P7</fullName>
        <shortName>P7</shortName>
    </recommendedName>
</protein>
<gene>
    <name evidence="2" type="primary">Segment-8</name>
    <name type="ORF">s8ORF2</name>
</gene>
<organism>
    <name type="scientific">Infectious salmon anemia virus (isolate Atlantic salmon/Norway/810/9/99)</name>
    <name type="common">ISAV</name>
    <dbReference type="NCBI Taxonomy" id="652965"/>
    <lineage>
        <taxon>Viruses</taxon>
        <taxon>Riboviria</taxon>
        <taxon>Orthornavirae</taxon>
        <taxon>Negarnaviricota</taxon>
        <taxon>Polyploviricotina</taxon>
        <taxon>Insthoviricetes</taxon>
        <taxon>Articulavirales</taxon>
        <taxon>Orthomyxoviridae</taxon>
        <taxon>Isavirus</taxon>
        <taxon>Isavirus salaris</taxon>
    </lineage>
</organism>
<dbReference type="EMBL" id="AF404340">
    <property type="protein sequence ID" value="AAL67955.1"/>
    <property type="molecule type" value="Genomic_RNA"/>
</dbReference>
<dbReference type="RefSeq" id="YP_145797.1">
    <property type="nucleotide sequence ID" value="NC_006497.1"/>
</dbReference>
<dbReference type="SMR" id="Q8V3U3"/>
<dbReference type="KEGG" id="vg:5075848"/>
<dbReference type="Proteomes" id="UP000008772">
    <property type="component" value="Genome"/>
</dbReference>
<dbReference type="GO" id="GO:0042025">
    <property type="term" value="C:host cell nucleus"/>
    <property type="evidence" value="ECO:0007669"/>
    <property type="project" value="UniProtKB-SubCell"/>
</dbReference>
<dbReference type="GO" id="GO:0052170">
    <property type="term" value="P:symbiont-mediated suppression of host innate immune response"/>
    <property type="evidence" value="ECO:0007669"/>
    <property type="project" value="UniProtKB-KW"/>
</dbReference>
<comment type="function">
    <text evidence="1">May play a role in inhibition of the host immune system by counteracting the type I interferon response.</text>
</comment>
<comment type="subcellular location">
    <subcellularLocation>
        <location evidence="1">Host nucleus</location>
    </subcellularLocation>
</comment>
<comment type="alternative products">
    <event type="alternative splicing"/>
    <isoform>
        <id>Q8V3U3-1</id>
        <name>Matrix protein 2</name>
        <sequence type="displayed"/>
    </isoform>
    <isoform>
        <id>Q8V3U4-1</id>
        <name>Matrix protein 1</name>
        <sequence type="external"/>
    </isoform>
</comment>
<name>P7_ISAV8</name>
<sequence>MREANPKPRELIRHALKKKKRPEVVYAMGVLLTLGGESGLTVEFPVPEGKTVKVKTLNQLVNGMISRATMTLYCVMKDPPSGGMATLMRDHIRNWLKEESGCQDADGGEEKWAMVYGMISPDMAEEKTMLKELKTMLHSRMQMYALGASSKALENLEKAIVAAVHRLPASCSTEKMVLLGYLK</sequence>
<accession>Q8V3U3</accession>